<dbReference type="EC" id="2.4.2.17" evidence="1"/>
<dbReference type="EMBL" id="AE015928">
    <property type="protein sequence ID" value="AAO75307.1"/>
    <property type="molecule type" value="Genomic_DNA"/>
</dbReference>
<dbReference type="RefSeq" id="NP_809113.1">
    <property type="nucleotide sequence ID" value="NC_004663.1"/>
</dbReference>
<dbReference type="RefSeq" id="WP_008760516.1">
    <property type="nucleotide sequence ID" value="NZ_UYXG01000025.1"/>
</dbReference>
<dbReference type="SMR" id="Q8ABB0"/>
<dbReference type="FunCoup" id="Q8ABB0">
    <property type="interactions" value="457"/>
</dbReference>
<dbReference type="STRING" id="226186.BT_0200"/>
<dbReference type="PaxDb" id="226186-BT_0200"/>
<dbReference type="EnsemblBacteria" id="AAO75307">
    <property type="protein sequence ID" value="AAO75307"/>
    <property type="gene ID" value="BT_0200"/>
</dbReference>
<dbReference type="GeneID" id="60926164"/>
<dbReference type="KEGG" id="bth:BT_0200"/>
<dbReference type="PATRIC" id="fig|226186.12.peg.198"/>
<dbReference type="eggNOG" id="COG0040">
    <property type="taxonomic scope" value="Bacteria"/>
</dbReference>
<dbReference type="HOGENOM" id="CLU_038115_1_0_10"/>
<dbReference type="InParanoid" id="Q8ABB0"/>
<dbReference type="OrthoDB" id="9801867at2"/>
<dbReference type="UniPathway" id="UPA00031">
    <property type="reaction ID" value="UER00006"/>
</dbReference>
<dbReference type="Proteomes" id="UP000001414">
    <property type="component" value="Chromosome"/>
</dbReference>
<dbReference type="GO" id="GO:0005737">
    <property type="term" value="C:cytoplasm"/>
    <property type="evidence" value="ECO:0007669"/>
    <property type="project" value="UniProtKB-SubCell"/>
</dbReference>
<dbReference type="GO" id="GO:0005524">
    <property type="term" value="F:ATP binding"/>
    <property type="evidence" value="ECO:0007669"/>
    <property type="project" value="UniProtKB-KW"/>
</dbReference>
<dbReference type="GO" id="GO:0003879">
    <property type="term" value="F:ATP phosphoribosyltransferase activity"/>
    <property type="evidence" value="ECO:0000318"/>
    <property type="project" value="GO_Central"/>
</dbReference>
<dbReference type="GO" id="GO:0000287">
    <property type="term" value="F:magnesium ion binding"/>
    <property type="evidence" value="ECO:0007669"/>
    <property type="project" value="UniProtKB-UniRule"/>
</dbReference>
<dbReference type="GO" id="GO:0000105">
    <property type="term" value="P:L-histidine biosynthetic process"/>
    <property type="evidence" value="ECO:0000318"/>
    <property type="project" value="GO_Central"/>
</dbReference>
<dbReference type="CDD" id="cd13592">
    <property type="entry name" value="PBP2_HisGL2"/>
    <property type="match status" value="1"/>
</dbReference>
<dbReference type="FunFam" id="3.30.70.120:FF:000002">
    <property type="entry name" value="ATP phosphoribosyltransferase"/>
    <property type="match status" value="1"/>
</dbReference>
<dbReference type="FunFam" id="3.40.190.10:FF:000008">
    <property type="entry name" value="ATP phosphoribosyltransferase"/>
    <property type="match status" value="1"/>
</dbReference>
<dbReference type="FunFam" id="3.40.190.10:FF:000082">
    <property type="entry name" value="ATP phosphoribosyltransferase"/>
    <property type="match status" value="1"/>
</dbReference>
<dbReference type="Gene3D" id="3.30.70.120">
    <property type="match status" value="1"/>
</dbReference>
<dbReference type="Gene3D" id="3.40.190.10">
    <property type="entry name" value="Periplasmic binding protein-like II"/>
    <property type="match status" value="2"/>
</dbReference>
<dbReference type="HAMAP" id="MF_00079">
    <property type="entry name" value="HisG_Long"/>
    <property type="match status" value="1"/>
</dbReference>
<dbReference type="InterPro" id="IPR020621">
    <property type="entry name" value="ATP-PRT_HisG_long"/>
</dbReference>
<dbReference type="InterPro" id="IPR013820">
    <property type="entry name" value="ATP_PRibTrfase_cat"/>
</dbReference>
<dbReference type="InterPro" id="IPR018198">
    <property type="entry name" value="ATP_PRibTrfase_CS"/>
</dbReference>
<dbReference type="InterPro" id="IPR001348">
    <property type="entry name" value="ATP_PRibTrfase_HisG"/>
</dbReference>
<dbReference type="InterPro" id="IPR013115">
    <property type="entry name" value="HisG_C"/>
</dbReference>
<dbReference type="InterPro" id="IPR011322">
    <property type="entry name" value="N-reg_PII-like_a/b"/>
</dbReference>
<dbReference type="InterPro" id="IPR015867">
    <property type="entry name" value="N-reg_PII/ATP_PRibTrfase_C"/>
</dbReference>
<dbReference type="NCBIfam" id="TIGR00070">
    <property type="entry name" value="hisG"/>
    <property type="match status" value="1"/>
</dbReference>
<dbReference type="NCBIfam" id="TIGR03455">
    <property type="entry name" value="HisG_C-term"/>
    <property type="match status" value="1"/>
</dbReference>
<dbReference type="PANTHER" id="PTHR21403:SF8">
    <property type="entry name" value="ATP PHOSPHORIBOSYLTRANSFERASE"/>
    <property type="match status" value="1"/>
</dbReference>
<dbReference type="PANTHER" id="PTHR21403">
    <property type="entry name" value="ATP PHOSPHORIBOSYLTRANSFERASE ATP-PRTASE"/>
    <property type="match status" value="1"/>
</dbReference>
<dbReference type="Pfam" id="PF01634">
    <property type="entry name" value="HisG"/>
    <property type="match status" value="1"/>
</dbReference>
<dbReference type="Pfam" id="PF08029">
    <property type="entry name" value="HisG_C"/>
    <property type="match status" value="1"/>
</dbReference>
<dbReference type="SUPFAM" id="SSF54913">
    <property type="entry name" value="GlnB-like"/>
    <property type="match status" value="1"/>
</dbReference>
<dbReference type="SUPFAM" id="SSF53850">
    <property type="entry name" value="Periplasmic binding protein-like II"/>
    <property type="match status" value="1"/>
</dbReference>
<dbReference type="PROSITE" id="PS01316">
    <property type="entry name" value="ATP_P_PHORIBOSYLTR"/>
    <property type="match status" value="1"/>
</dbReference>
<keyword id="KW-0028">Amino-acid biosynthesis</keyword>
<keyword id="KW-0067">ATP-binding</keyword>
<keyword id="KW-0963">Cytoplasm</keyword>
<keyword id="KW-0328">Glycosyltransferase</keyword>
<keyword id="KW-0368">Histidine biosynthesis</keyword>
<keyword id="KW-0460">Magnesium</keyword>
<keyword id="KW-0479">Metal-binding</keyword>
<keyword id="KW-0547">Nucleotide-binding</keyword>
<keyword id="KW-1185">Reference proteome</keyword>
<keyword id="KW-0808">Transferase</keyword>
<evidence type="ECO:0000255" key="1">
    <source>
        <dbReference type="HAMAP-Rule" id="MF_00079"/>
    </source>
</evidence>
<reference key="1">
    <citation type="journal article" date="2003" name="Science">
        <title>A genomic view of the human-Bacteroides thetaiotaomicron symbiosis.</title>
        <authorList>
            <person name="Xu J."/>
            <person name="Bjursell M.K."/>
            <person name="Himrod J."/>
            <person name="Deng S."/>
            <person name="Carmichael L.K."/>
            <person name="Chiang H.C."/>
            <person name="Hooper L.V."/>
            <person name="Gordon J.I."/>
        </authorList>
    </citation>
    <scope>NUCLEOTIDE SEQUENCE [LARGE SCALE GENOMIC DNA]</scope>
    <source>
        <strain>ATCC 29148 / DSM 2079 / JCM 5827 / CCUG 10774 / NCTC 10582 / VPI-5482 / E50</strain>
    </source>
</reference>
<organism>
    <name type="scientific">Bacteroides thetaiotaomicron (strain ATCC 29148 / DSM 2079 / JCM 5827 / CCUG 10774 / NCTC 10582 / VPI-5482 / E50)</name>
    <dbReference type="NCBI Taxonomy" id="226186"/>
    <lineage>
        <taxon>Bacteria</taxon>
        <taxon>Pseudomonadati</taxon>
        <taxon>Bacteroidota</taxon>
        <taxon>Bacteroidia</taxon>
        <taxon>Bacteroidales</taxon>
        <taxon>Bacteroidaceae</taxon>
        <taxon>Bacteroides</taxon>
    </lineage>
</organism>
<name>HIS1_BACTN</name>
<protein>
    <recommendedName>
        <fullName evidence="1">ATP phosphoribosyltransferase</fullName>
        <shortName evidence="1">ATP-PRT</shortName>
        <shortName evidence="1">ATP-PRTase</shortName>
        <ecNumber evidence="1">2.4.2.17</ecNumber>
    </recommendedName>
</protein>
<feature type="chain" id="PRO_0000151830" description="ATP phosphoribosyltransferase">
    <location>
        <begin position="1"/>
        <end position="283"/>
    </location>
</feature>
<proteinExistence type="inferred from homology"/>
<gene>
    <name evidence="1" type="primary">hisG</name>
    <name type="ordered locus">BT_0200</name>
</gene>
<sequence>MLRIAVQAKGRLFEETMALLGESDIKISTTKRTLLVQSSNFPIEVLFLRDDDIPQTVATGVADLGIVGENEFMEKEEDAEIIKRLGFSKCRLSLAMPKDIEYPGLSWFNGKKIATSYPVILRNFLKKNGVNAEIHVITGSVEVSPGIGLADAIFDIVSSGSTLVSNRLKEVEVVMKSEALLIGNKNMSDEKKEVLEELLFRMNAVKTAEDKKYVLMNAPKDKLEEIIAVLPGMKSPTIMPLAQEGWCSVHTVLDEKRFWEIIGKLKGLGAEGILVLPIEKMIV</sequence>
<comment type="function">
    <text evidence="1">Catalyzes the condensation of ATP and 5-phosphoribose 1-diphosphate to form N'-(5'-phosphoribosyl)-ATP (PR-ATP). Has a crucial role in the pathway because the rate of histidine biosynthesis seems to be controlled primarily by regulation of HisG enzymatic activity.</text>
</comment>
<comment type="catalytic activity">
    <reaction evidence="1">
        <text>1-(5-phospho-beta-D-ribosyl)-ATP + diphosphate = 5-phospho-alpha-D-ribose 1-diphosphate + ATP</text>
        <dbReference type="Rhea" id="RHEA:18473"/>
        <dbReference type="ChEBI" id="CHEBI:30616"/>
        <dbReference type="ChEBI" id="CHEBI:33019"/>
        <dbReference type="ChEBI" id="CHEBI:58017"/>
        <dbReference type="ChEBI" id="CHEBI:73183"/>
        <dbReference type="EC" id="2.4.2.17"/>
    </reaction>
</comment>
<comment type="cofactor">
    <cofactor evidence="1">
        <name>Mg(2+)</name>
        <dbReference type="ChEBI" id="CHEBI:18420"/>
    </cofactor>
</comment>
<comment type="activity regulation">
    <text evidence="1">Feedback inhibited by histidine.</text>
</comment>
<comment type="pathway">
    <text evidence="1">Amino-acid biosynthesis; L-histidine biosynthesis; L-histidine from 5-phospho-alpha-D-ribose 1-diphosphate: step 1/9.</text>
</comment>
<comment type="subcellular location">
    <subcellularLocation>
        <location evidence="1">Cytoplasm</location>
    </subcellularLocation>
</comment>
<comment type="similarity">
    <text evidence="1">Belongs to the ATP phosphoribosyltransferase family. Long subfamily.</text>
</comment>
<accession>Q8ABB0</accession>